<proteinExistence type="inferred from homology"/>
<comment type="function">
    <text evidence="1">Attaches a formyl group to the free amino group of methionyl-tRNA(fMet). The formyl group appears to play a dual role in the initiator identity of N-formylmethionyl-tRNA by promoting its recognition by IF2 and preventing the misappropriation of this tRNA by the elongation apparatus.</text>
</comment>
<comment type="catalytic activity">
    <reaction evidence="1">
        <text>L-methionyl-tRNA(fMet) + (6R)-10-formyltetrahydrofolate = N-formyl-L-methionyl-tRNA(fMet) + (6S)-5,6,7,8-tetrahydrofolate + H(+)</text>
        <dbReference type="Rhea" id="RHEA:24380"/>
        <dbReference type="Rhea" id="RHEA-COMP:9952"/>
        <dbReference type="Rhea" id="RHEA-COMP:9953"/>
        <dbReference type="ChEBI" id="CHEBI:15378"/>
        <dbReference type="ChEBI" id="CHEBI:57453"/>
        <dbReference type="ChEBI" id="CHEBI:78530"/>
        <dbReference type="ChEBI" id="CHEBI:78844"/>
        <dbReference type="ChEBI" id="CHEBI:195366"/>
        <dbReference type="EC" id="2.1.2.9"/>
    </reaction>
</comment>
<comment type="similarity">
    <text evidence="1">Belongs to the Fmt family.</text>
</comment>
<organism>
    <name type="scientific">Bacillus mycoides (strain KBAB4)</name>
    <name type="common">Bacillus weihenstephanensis</name>
    <dbReference type="NCBI Taxonomy" id="315730"/>
    <lineage>
        <taxon>Bacteria</taxon>
        <taxon>Bacillati</taxon>
        <taxon>Bacillota</taxon>
        <taxon>Bacilli</taxon>
        <taxon>Bacillales</taxon>
        <taxon>Bacillaceae</taxon>
        <taxon>Bacillus</taxon>
        <taxon>Bacillus cereus group</taxon>
    </lineage>
</organism>
<dbReference type="EC" id="2.1.2.9" evidence="1"/>
<dbReference type="EMBL" id="CP000903">
    <property type="protein sequence ID" value="ABY44860.1"/>
    <property type="molecule type" value="Genomic_DNA"/>
</dbReference>
<dbReference type="RefSeq" id="WP_002014498.1">
    <property type="nucleotide sequence ID" value="NC_010184.1"/>
</dbReference>
<dbReference type="SMR" id="A9VTA4"/>
<dbReference type="KEGG" id="bwe:BcerKBAB4_3689"/>
<dbReference type="eggNOG" id="COG0223">
    <property type="taxonomic scope" value="Bacteria"/>
</dbReference>
<dbReference type="HOGENOM" id="CLU_033347_1_1_9"/>
<dbReference type="Proteomes" id="UP000002154">
    <property type="component" value="Chromosome"/>
</dbReference>
<dbReference type="GO" id="GO:0005829">
    <property type="term" value="C:cytosol"/>
    <property type="evidence" value="ECO:0007669"/>
    <property type="project" value="TreeGrafter"/>
</dbReference>
<dbReference type="GO" id="GO:0004479">
    <property type="term" value="F:methionyl-tRNA formyltransferase activity"/>
    <property type="evidence" value="ECO:0007669"/>
    <property type="project" value="UniProtKB-UniRule"/>
</dbReference>
<dbReference type="CDD" id="cd08646">
    <property type="entry name" value="FMT_core_Met-tRNA-FMT_N"/>
    <property type="match status" value="1"/>
</dbReference>
<dbReference type="CDD" id="cd08704">
    <property type="entry name" value="Met_tRNA_FMT_C"/>
    <property type="match status" value="1"/>
</dbReference>
<dbReference type="FunFam" id="3.10.25.10:FF:000003">
    <property type="entry name" value="Methionyl-tRNA formyltransferase"/>
    <property type="match status" value="1"/>
</dbReference>
<dbReference type="FunFam" id="3.40.50.12230:FF:000001">
    <property type="entry name" value="Methionyl-tRNA formyltransferase"/>
    <property type="match status" value="1"/>
</dbReference>
<dbReference type="FunFam" id="3.40.50.170:FF:000004">
    <property type="entry name" value="Methionyl-tRNA formyltransferase"/>
    <property type="match status" value="1"/>
</dbReference>
<dbReference type="Gene3D" id="3.10.25.10">
    <property type="entry name" value="Formyl transferase, C-terminal domain"/>
    <property type="match status" value="1"/>
</dbReference>
<dbReference type="Gene3D" id="3.40.50.170">
    <property type="entry name" value="Formyl transferase, N-terminal domain"/>
    <property type="match status" value="1"/>
</dbReference>
<dbReference type="HAMAP" id="MF_00182">
    <property type="entry name" value="Formyl_trans"/>
    <property type="match status" value="1"/>
</dbReference>
<dbReference type="InterPro" id="IPR005794">
    <property type="entry name" value="Fmt"/>
</dbReference>
<dbReference type="InterPro" id="IPR005793">
    <property type="entry name" value="Formyl_trans_C"/>
</dbReference>
<dbReference type="InterPro" id="IPR037022">
    <property type="entry name" value="Formyl_trans_C_sf"/>
</dbReference>
<dbReference type="InterPro" id="IPR002376">
    <property type="entry name" value="Formyl_transf_N"/>
</dbReference>
<dbReference type="InterPro" id="IPR036477">
    <property type="entry name" value="Formyl_transf_N_sf"/>
</dbReference>
<dbReference type="InterPro" id="IPR011034">
    <property type="entry name" value="Formyl_transferase-like_C_sf"/>
</dbReference>
<dbReference type="InterPro" id="IPR001555">
    <property type="entry name" value="GART_AS"/>
</dbReference>
<dbReference type="InterPro" id="IPR044135">
    <property type="entry name" value="Met-tRNA-FMT_C"/>
</dbReference>
<dbReference type="InterPro" id="IPR041711">
    <property type="entry name" value="Met-tRNA-FMT_N"/>
</dbReference>
<dbReference type="NCBIfam" id="TIGR00460">
    <property type="entry name" value="fmt"/>
    <property type="match status" value="1"/>
</dbReference>
<dbReference type="PANTHER" id="PTHR11138">
    <property type="entry name" value="METHIONYL-TRNA FORMYLTRANSFERASE"/>
    <property type="match status" value="1"/>
</dbReference>
<dbReference type="PANTHER" id="PTHR11138:SF5">
    <property type="entry name" value="METHIONYL-TRNA FORMYLTRANSFERASE, MITOCHONDRIAL"/>
    <property type="match status" value="1"/>
</dbReference>
<dbReference type="Pfam" id="PF02911">
    <property type="entry name" value="Formyl_trans_C"/>
    <property type="match status" value="1"/>
</dbReference>
<dbReference type="Pfam" id="PF00551">
    <property type="entry name" value="Formyl_trans_N"/>
    <property type="match status" value="1"/>
</dbReference>
<dbReference type="SUPFAM" id="SSF50486">
    <property type="entry name" value="FMT C-terminal domain-like"/>
    <property type="match status" value="1"/>
</dbReference>
<dbReference type="SUPFAM" id="SSF53328">
    <property type="entry name" value="Formyltransferase"/>
    <property type="match status" value="1"/>
</dbReference>
<dbReference type="PROSITE" id="PS00373">
    <property type="entry name" value="GART"/>
    <property type="match status" value="1"/>
</dbReference>
<protein>
    <recommendedName>
        <fullName evidence="1">Methionyl-tRNA formyltransferase</fullName>
        <ecNumber evidence="1">2.1.2.9</ecNumber>
    </recommendedName>
</protein>
<sequence>MMKVVFMGTPDFSVPVLRRLIEDGYDVVGVVTQPDRPVGRKKVLTPTPVKVEAEKHGIPVVQPLKIREKDEYEKVLALEPDLIVTAAFGQIVPNEILEAPKYGCINVHASLLPELRGGAPIHYAIMEGKEKTGITIMYMVEKLDAGDILTQVEVEIEERETTGSLFDKLSEAGAHLLSKTVPLLIQGKLEPIKQSEAEVTFAYNIKREQEIIDWTKTGEEVYNHIRGLNPWPVAYTTLAGQVIKVWWGEKVSITEKAEPGTIVALEEDGFVVATGNETGVKITELQPSGKKRMSCSQFLRGTKPEIGTKLGENA</sequence>
<accession>A9VTA4</accession>
<gene>
    <name evidence="1" type="primary">fmt</name>
    <name type="ordered locus">BcerKBAB4_3689</name>
</gene>
<name>FMT_BACMK</name>
<evidence type="ECO:0000255" key="1">
    <source>
        <dbReference type="HAMAP-Rule" id="MF_00182"/>
    </source>
</evidence>
<feature type="chain" id="PRO_1000098376" description="Methionyl-tRNA formyltransferase">
    <location>
        <begin position="1"/>
        <end position="314"/>
    </location>
</feature>
<feature type="binding site" evidence="1">
    <location>
        <begin position="110"/>
        <end position="113"/>
    </location>
    <ligand>
        <name>(6S)-5,6,7,8-tetrahydrofolate</name>
        <dbReference type="ChEBI" id="CHEBI:57453"/>
    </ligand>
</feature>
<keyword id="KW-0648">Protein biosynthesis</keyword>
<keyword id="KW-0808">Transferase</keyword>
<reference key="1">
    <citation type="journal article" date="2008" name="Chem. Biol. Interact.">
        <title>Extending the Bacillus cereus group genomics to putative food-borne pathogens of different toxicity.</title>
        <authorList>
            <person name="Lapidus A."/>
            <person name="Goltsman E."/>
            <person name="Auger S."/>
            <person name="Galleron N."/>
            <person name="Segurens B."/>
            <person name="Dossat C."/>
            <person name="Land M.L."/>
            <person name="Broussolle V."/>
            <person name="Brillard J."/>
            <person name="Guinebretiere M.-H."/>
            <person name="Sanchis V."/>
            <person name="Nguen-the C."/>
            <person name="Lereclus D."/>
            <person name="Richardson P."/>
            <person name="Wincker P."/>
            <person name="Weissenbach J."/>
            <person name="Ehrlich S.D."/>
            <person name="Sorokin A."/>
        </authorList>
    </citation>
    <scope>NUCLEOTIDE SEQUENCE [LARGE SCALE GENOMIC DNA]</scope>
    <source>
        <strain>KBAB4</strain>
    </source>
</reference>